<name>PNP_BURM1</name>
<sequence length="715" mass="77131">MSMFNKVVKEFQWGQHKVRLETGEIARQASGAVIVDVEDTVVLATVVGAKSAKPGQDFFPLTVDYIEKTYSAGKIPGGFFRREGRPSEHETLTSRLIDRPLRPLFPEGFYNEVQVVIHVLSVNPEIPADIPALIGASAALAVSGLPFNGPVGAARVAYVNDQYVLNPTREQLKSSRLDLVVAGTERAVLMVESEADQLPEEVMLGAVVFGHEQMQTAIDAIHELVRDGGKPEWDWQPAPKDEALIARVTEIAQPELLAAYQIRDKQARSTKLKEVYAATSAKLEEDALAAGTVAADKATVGNILFDLEAKIVRGQILNGEPRIDGRDTRTVRPIEIRTGVLPRTHGSALFTRGETQALVVATLGTKGDEQIIDALEGEYRERFMLHYNMPPFATGETGRVGSPKRREIGHGRLAKRALVACLPSAEEFGYSIRVVSEITESNGSSSMASVCGGCLALMDAGVPMKAHVAGIAMGLILEGNKFAVLTDILGDEDHLGDMDFKVAGTAQGVTALQMDIKIQGITKEIMQVALAQAKEGRMHILGKMTEAVAGANTQLSEFAPRMITIKINPEKIRDVIGKGGSVIRALTEETGTTIDISDDGVVTIASTSSEGMAEAKKRIENITAEIEVGQVYEGTVLKLLDFGAIVNLLPGKDGLLHISEIVNERVKDINDYLKEGQQVKVKVIQTDEKGRVRLSAKALLNEAAAAAQSDTPPQQ</sequence>
<proteinExistence type="inferred from homology"/>
<gene>
    <name evidence="1" type="primary">pnp</name>
    <name type="ordered locus">Bmul_1024</name>
    <name type="ordered locus">BMULJ_02240</name>
</gene>
<reference key="1">
    <citation type="submission" date="2007-10" db="EMBL/GenBank/DDBJ databases">
        <title>Complete sequence of chromosome 1 of Burkholderia multivorans ATCC 17616.</title>
        <authorList>
            <person name="Copeland A."/>
            <person name="Lucas S."/>
            <person name="Lapidus A."/>
            <person name="Barry K."/>
            <person name="Glavina del Rio T."/>
            <person name="Dalin E."/>
            <person name="Tice H."/>
            <person name="Pitluck S."/>
            <person name="Chain P."/>
            <person name="Malfatti S."/>
            <person name="Shin M."/>
            <person name="Vergez L."/>
            <person name="Schmutz J."/>
            <person name="Larimer F."/>
            <person name="Land M."/>
            <person name="Hauser L."/>
            <person name="Kyrpides N."/>
            <person name="Kim E."/>
            <person name="Tiedje J."/>
            <person name="Richardson P."/>
        </authorList>
    </citation>
    <scope>NUCLEOTIDE SEQUENCE [LARGE SCALE GENOMIC DNA]</scope>
    <source>
        <strain>ATCC 17616 / 249</strain>
    </source>
</reference>
<reference key="2">
    <citation type="submission" date="2007-04" db="EMBL/GenBank/DDBJ databases">
        <title>Complete genome sequence of Burkholderia multivorans ATCC 17616.</title>
        <authorList>
            <person name="Ohtsubo Y."/>
            <person name="Yamashita A."/>
            <person name="Kurokawa K."/>
            <person name="Takami H."/>
            <person name="Yuhara S."/>
            <person name="Nishiyama E."/>
            <person name="Endo R."/>
            <person name="Miyazaki R."/>
            <person name="Ono A."/>
            <person name="Yano K."/>
            <person name="Ito M."/>
            <person name="Sota M."/>
            <person name="Yuji N."/>
            <person name="Hattori M."/>
            <person name="Tsuda M."/>
        </authorList>
    </citation>
    <scope>NUCLEOTIDE SEQUENCE [LARGE SCALE GENOMIC DNA]</scope>
    <source>
        <strain>ATCC 17616 / 249</strain>
    </source>
</reference>
<comment type="function">
    <text evidence="1">Involved in mRNA degradation. Catalyzes the phosphorolysis of single-stranded polyribonucleotides processively in the 3'- to 5'-direction.</text>
</comment>
<comment type="catalytic activity">
    <reaction evidence="1">
        <text>RNA(n+1) + phosphate = RNA(n) + a ribonucleoside 5'-diphosphate</text>
        <dbReference type="Rhea" id="RHEA:22096"/>
        <dbReference type="Rhea" id="RHEA-COMP:14527"/>
        <dbReference type="Rhea" id="RHEA-COMP:17342"/>
        <dbReference type="ChEBI" id="CHEBI:43474"/>
        <dbReference type="ChEBI" id="CHEBI:57930"/>
        <dbReference type="ChEBI" id="CHEBI:140395"/>
        <dbReference type="EC" id="2.7.7.8"/>
    </reaction>
</comment>
<comment type="cofactor">
    <cofactor evidence="1">
        <name>Mg(2+)</name>
        <dbReference type="ChEBI" id="CHEBI:18420"/>
    </cofactor>
</comment>
<comment type="subcellular location">
    <subcellularLocation>
        <location evidence="1">Cytoplasm</location>
    </subcellularLocation>
</comment>
<comment type="similarity">
    <text evidence="1">Belongs to the polyribonucleotide nucleotidyltransferase family.</text>
</comment>
<accession>A9AJP0</accession>
<dbReference type="EC" id="2.7.7.8" evidence="1"/>
<dbReference type="EMBL" id="CP000868">
    <property type="protein sequence ID" value="ABX14715.1"/>
    <property type="molecule type" value="Genomic_DNA"/>
</dbReference>
<dbReference type="EMBL" id="AP009385">
    <property type="protein sequence ID" value="BAG44135.1"/>
    <property type="molecule type" value="Genomic_DNA"/>
</dbReference>
<dbReference type="RefSeq" id="WP_006410113.1">
    <property type="nucleotide sequence ID" value="NC_010804.1"/>
</dbReference>
<dbReference type="SMR" id="A9AJP0"/>
<dbReference type="STRING" id="395019.BMULJ_02240"/>
<dbReference type="GeneID" id="89570785"/>
<dbReference type="KEGG" id="bmj:BMULJ_02240"/>
<dbReference type="KEGG" id="bmu:Bmul_1024"/>
<dbReference type="eggNOG" id="COG1185">
    <property type="taxonomic scope" value="Bacteria"/>
</dbReference>
<dbReference type="HOGENOM" id="CLU_004217_2_2_4"/>
<dbReference type="Proteomes" id="UP000008815">
    <property type="component" value="Chromosome 1"/>
</dbReference>
<dbReference type="GO" id="GO:0005829">
    <property type="term" value="C:cytosol"/>
    <property type="evidence" value="ECO:0007669"/>
    <property type="project" value="TreeGrafter"/>
</dbReference>
<dbReference type="GO" id="GO:0000175">
    <property type="term" value="F:3'-5'-RNA exonuclease activity"/>
    <property type="evidence" value="ECO:0007669"/>
    <property type="project" value="TreeGrafter"/>
</dbReference>
<dbReference type="GO" id="GO:0000287">
    <property type="term" value="F:magnesium ion binding"/>
    <property type="evidence" value="ECO:0007669"/>
    <property type="project" value="UniProtKB-UniRule"/>
</dbReference>
<dbReference type="GO" id="GO:0004654">
    <property type="term" value="F:polyribonucleotide nucleotidyltransferase activity"/>
    <property type="evidence" value="ECO:0007669"/>
    <property type="project" value="UniProtKB-UniRule"/>
</dbReference>
<dbReference type="GO" id="GO:0003723">
    <property type="term" value="F:RNA binding"/>
    <property type="evidence" value="ECO:0007669"/>
    <property type="project" value="UniProtKB-UniRule"/>
</dbReference>
<dbReference type="GO" id="GO:0006402">
    <property type="term" value="P:mRNA catabolic process"/>
    <property type="evidence" value="ECO:0007669"/>
    <property type="project" value="UniProtKB-UniRule"/>
</dbReference>
<dbReference type="GO" id="GO:0006396">
    <property type="term" value="P:RNA processing"/>
    <property type="evidence" value="ECO:0007669"/>
    <property type="project" value="InterPro"/>
</dbReference>
<dbReference type="CDD" id="cd02393">
    <property type="entry name" value="KH-I_PNPase"/>
    <property type="match status" value="1"/>
</dbReference>
<dbReference type="CDD" id="cd11363">
    <property type="entry name" value="RNase_PH_PNPase_1"/>
    <property type="match status" value="1"/>
</dbReference>
<dbReference type="CDD" id="cd11364">
    <property type="entry name" value="RNase_PH_PNPase_2"/>
    <property type="match status" value="1"/>
</dbReference>
<dbReference type="CDD" id="cd04472">
    <property type="entry name" value="S1_PNPase"/>
    <property type="match status" value="1"/>
</dbReference>
<dbReference type="FunFam" id="3.30.1370.10:FF:000001">
    <property type="entry name" value="Polyribonucleotide nucleotidyltransferase"/>
    <property type="match status" value="1"/>
</dbReference>
<dbReference type="FunFam" id="3.30.230.70:FF:000001">
    <property type="entry name" value="Polyribonucleotide nucleotidyltransferase"/>
    <property type="match status" value="1"/>
</dbReference>
<dbReference type="FunFam" id="3.30.230.70:FF:000002">
    <property type="entry name" value="Polyribonucleotide nucleotidyltransferase"/>
    <property type="match status" value="1"/>
</dbReference>
<dbReference type="FunFam" id="2.40.50.140:FF:000189">
    <property type="entry name" value="Polyribonucleotide nucleotidyltransferase, putative"/>
    <property type="match status" value="1"/>
</dbReference>
<dbReference type="Gene3D" id="3.30.230.70">
    <property type="entry name" value="GHMP Kinase, N-terminal domain"/>
    <property type="match status" value="2"/>
</dbReference>
<dbReference type="Gene3D" id="3.30.1370.10">
    <property type="entry name" value="K Homology domain, type 1"/>
    <property type="match status" value="1"/>
</dbReference>
<dbReference type="Gene3D" id="2.40.50.140">
    <property type="entry name" value="Nucleic acid-binding proteins"/>
    <property type="match status" value="1"/>
</dbReference>
<dbReference type="HAMAP" id="MF_01595">
    <property type="entry name" value="PNPase"/>
    <property type="match status" value="1"/>
</dbReference>
<dbReference type="InterPro" id="IPR001247">
    <property type="entry name" value="ExoRNase_PH_dom1"/>
</dbReference>
<dbReference type="InterPro" id="IPR015847">
    <property type="entry name" value="ExoRNase_PH_dom2"/>
</dbReference>
<dbReference type="InterPro" id="IPR036345">
    <property type="entry name" value="ExoRNase_PH_dom2_sf"/>
</dbReference>
<dbReference type="InterPro" id="IPR004087">
    <property type="entry name" value="KH_dom"/>
</dbReference>
<dbReference type="InterPro" id="IPR004088">
    <property type="entry name" value="KH_dom_type_1"/>
</dbReference>
<dbReference type="InterPro" id="IPR036612">
    <property type="entry name" value="KH_dom_type_1_sf"/>
</dbReference>
<dbReference type="InterPro" id="IPR012340">
    <property type="entry name" value="NA-bd_OB-fold"/>
</dbReference>
<dbReference type="InterPro" id="IPR012162">
    <property type="entry name" value="PNPase"/>
</dbReference>
<dbReference type="InterPro" id="IPR027408">
    <property type="entry name" value="PNPase/RNase_PH_dom_sf"/>
</dbReference>
<dbReference type="InterPro" id="IPR015848">
    <property type="entry name" value="PNPase_PH_RNA-bd_bac/org-type"/>
</dbReference>
<dbReference type="InterPro" id="IPR036456">
    <property type="entry name" value="PNPase_PH_RNA-bd_sf"/>
</dbReference>
<dbReference type="InterPro" id="IPR020568">
    <property type="entry name" value="Ribosomal_Su5_D2-typ_SF"/>
</dbReference>
<dbReference type="InterPro" id="IPR003029">
    <property type="entry name" value="S1_domain"/>
</dbReference>
<dbReference type="NCBIfam" id="TIGR03591">
    <property type="entry name" value="polynuc_phos"/>
    <property type="match status" value="1"/>
</dbReference>
<dbReference type="NCBIfam" id="NF008805">
    <property type="entry name" value="PRK11824.1"/>
    <property type="match status" value="1"/>
</dbReference>
<dbReference type="PANTHER" id="PTHR11252">
    <property type="entry name" value="POLYRIBONUCLEOTIDE NUCLEOTIDYLTRANSFERASE"/>
    <property type="match status" value="1"/>
</dbReference>
<dbReference type="PANTHER" id="PTHR11252:SF0">
    <property type="entry name" value="POLYRIBONUCLEOTIDE NUCLEOTIDYLTRANSFERASE 1, MITOCHONDRIAL"/>
    <property type="match status" value="1"/>
</dbReference>
<dbReference type="Pfam" id="PF00013">
    <property type="entry name" value="KH_1"/>
    <property type="match status" value="1"/>
</dbReference>
<dbReference type="Pfam" id="PF03726">
    <property type="entry name" value="PNPase"/>
    <property type="match status" value="1"/>
</dbReference>
<dbReference type="Pfam" id="PF01138">
    <property type="entry name" value="RNase_PH"/>
    <property type="match status" value="2"/>
</dbReference>
<dbReference type="Pfam" id="PF03725">
    <property type="entry name" value="RNase_PH_C"/>
    <property type="match status" value="2"/>
</dbReference>
<dbReference type="Pfam" id="PF00575">
    <property type="entry name" value="S1"/>
    <property type="match status" value="1"/>
</dbReference>
<dbReference type="PIRSF" id="PIRSF005499">
    <property type="entry name" value="PNPase"/>
    <property type="match status" value="1"/>
</dbReference>
<dbReference type="SMART" id="SM00322">
    <property type="entry name" value="KH"/>
    <property type="match status" value="1"/>
</dbReference>
<dbReference type="SMART" id="SM00316">
    <property type="entry name" value="S1"/>
    <property type="match status" value="1"/>
</dbReference>
<dbReference type="SUPFAM" id="SSF54791">
    <property type="entry name" value="Eukaryotic type KH-domain (KH-domain type I)"/>
    <property type="match status" value="1"/>
</dbReference>
<dbReference type="SUPFAM" id="SSF50249">
    <property type="entry name" value="Nucleic acid-binding proteins"/>
    <property type="match status" value="1"/>
</dbReference>
<dbReference type="SUPFAM" id="SSF46915">
    <property type="entry name" value="Polynucleotide phosphorylase/guanosine pentaphosphate synthase (PNPase/GPSI), domain 3"/>
    <property type="match status" value="1"/>
</dbReference>
<dbReference type="SUPFAM" id="SSF55666">
    <property type="entry name" value="Ribonuclease PH domain 2-like"/>
    <property type="match status" value="2"/>
</dbReference>
<dbReference type="SUPFAM" id="SSF54211">
    <property type="entry name" value="Ribosomal protein S5 domain 2-like"/>
    <property type="match status" value="2"/>
</dbReference>
<dbReference type="PROSITE" id="PS50084">
    <property type="entry name" value="KH_TYPE_1"/>
    <property type="match status" value="1"/>
</dbReference>
<dbReference type="PROSITE" id="PS50126">
    <property type="entry name" value="S1"/>
    <property type="match status" value="1"/>
</dbReference>
<organism>
    <name type="scientific">Burkholderia multivorans (strain ATCC 17616 / 249)</name>
    <dbReference type="NCBI Taxonomy" id="395019"/>
    <lineage>
        <taxon>Bacteria</taxon>
        <taxon>Pseudomonadati</taxon>
        <taxon>Pseudomonadota</taxon>
        <taxon>Betaproteobacteria</taxon>
        <taxon>Burkholderiales</taxon>
        <taxon>Burkholderiaceae</taxon>
        <taxon>Burkholderia</taxon>
        <taxon>Burkholderia cepacia complex</taxon>
    </lineage>
</organism>
<protein>
    <recommendedName>
        <fullName evidence="1">Polyribonucleotide nucleotidyltransferase</fullName>
        <ecNumber evidence="1">2.7.7.8</ecNumber>
    </recommendedName>
    <alternativeName>
        <fullName evidence="1">Polynucleotide phosphorylase</fullName>
        <shortName evidence="1">PNPase</shortName>
    </alternativeName>
</protein>
<keyword id="KW-0963">Cytoplasm</keyword>
<keyword id="KW-0460">Magnesium</keyword>
<keyword id="KW-0479">Metal-binding</keyword>
<keyword id="KW-0548">Nucleotidyltransferase</keyword>
<keyword id="KW-1185">Reference proteome</keyword>
<keyword id="KW-0694">RNA-binding</keyword>
<keyword id="KW-0808">Transferase</keyword>
<evidence type="ECO:0000255" key="1">
    <source>
        <dbReference type="HAMAP-Rule" id="MF_01595"/>
    </source>
</evidence>
<feature type="chain" id="PRO_1000147896" description="Polyribonucleotide nucleotidyltransferase">
    <location>
        <begin position="1"/>
        <end position="715"/>
    </location>
</feature>
<feature type="domain" description="KH" evidence="1">
    <location>
        <begin position="560"/>
        <end position="619"/>
    </location>
</feature>
<feature type="domain" description="S1 motif" evidence="1">
    <location>
        <begin position="629"/>
        <end position="697"/>
    </location>
</feature>
<feature type="binding site" evidence="1">
    <location>
        <position position="493"/>
    </location>
    <ligand>
        <name>Mg(2+)</name>
        <dbReference type="ChEBI" id="CHEBI:18420"/>
    </ligand>
</feature>
<feature type="binding site" evidence="1">
    <location>
        <position position="499"/>
    </location>
    <ligand>
        <name>Mg(2+)</name>
        <dbReference type="ChEBI" id="CHEBI:18420"/>
    </ligand>
</feature>